<accession>P34926</accession>
<proteinExistence type="evidence at protein level"/>
<sequence length="2774" mass="299531">MDGVAEFSEYVSETVDVPSPFDLLEPPTSGGFLKLSKPCCYIFPGGRGDSALFAVNGFNILVDGGSDRKSCFWKLVRHLDRIDSVLLTHIGADNLPGINGLLQRKVAELEEEQSQGSSSYSDWVKNLISPELGVVFFNVPDKLRLPDASRKAKRSIEEACLTLQHLNRLGIQAEPLYRVVSNTIEPLTLFHKMGVGRLDMYVLNPVKDSKEMQFLMQKWAGNSKAKTGIVLANGKEAEISVPYLTSITALVVWLPANPTEKIVRVLFPGNAPQNKILEGLEKLRHLDFLRYPVATQKDLAAGAVPANLKPSKIKHRADSKESLKAAPKTAVSKLAKREEVLEEGAKEARSELAKELAKTEKKAKEPSEKPPEKPSKSERVRGESSEALKAEKRRLIKDKAGKKHLKEKISKLEEKKDKEKKEIKKERKELKKEEGRKEEKKDAKKDEKRKDTKPEVKKLSKPDLKPFTPEVRKTLYKAKAPGRVKVDKGRAARGEKELSSEPRTPPAQKGAAPPAAVSGHRELALSSPEDLTQDFEELKREERGLLAEQRDTGLGEKPLPADATEQGHPSAAIQVTQPSGPVLEGEHVEREKEVVPDSPGDKGSTNRGPDSGAEVEKEKETWEERKQREAELGPENTAAREESEAEVKEDVIEKAELEEMEETHPSDEEGEETKAESFYQKHTQEALKASPKSREALGGRDLGFQGKAPEKETASFLSSLATPAGATEHVSYIQDETIPGYSETEQTISDEEIHDEPDERPAPPRFPTSTYDLSGPEGPGPFEASQAADSAVPASSSKTYGAPETELTYPPNMVAAPLAEEEHVSSATSITECDKLSSFATSVAEDQSVASLTAPQTEETGKSSLLLDTVTSIPSSRTEATQGLDYVPSAGTISPTSSLEEDKGFKSPPCEDFSVTGESEKKGETVGRGLSGEKAVGKEEKYVVTSEKLSGQYAAVFGAPGHTLPPGEPALGEVEERCLSPDDSTVKMASPPPSGPPSAAHTPFHQSPVEDKSEPRDFQEDSWGETKHSPGVSKEDSEEQTVKPGPEEGTSEEGKGPPTRSPQAQDMPVSIAGGQTGCTIQLLPEQDKAIVFETGEAGSNLGAGTLPGEVRTSTEEATEPQKDEVLRFTDQSLSPEDAESLSVLSVVSPDTTKQEATPRSPCSLKEQQPHKDLWPMVSPEDTQSLSFSEESPSKETSLDISSKQLSPESLGTLQFGELNLGKEERGPVMKAEDDSCHLAPVSIPEPHRATVSPSTDETPAGTLPGGSFSHSALSVDRKHSPGEITGPGGHFMTSDSSLTKSPESLSSPAMEDLAVEWEGKAPGKEKEPELKSETRQQKGQILPEKVAVVEQDLIIHQKDGALDEENKPGRQQDKTPEQKGRDLDEKDTAAELDKGPEPKEKDLDREDQGQRAGPPAEKDKASEQRDTDLQQTQATEPRDRAQERRDSEEKDKSLELRDRTPEEKDRILVQEDRAPEHSIPEPTQTDRAPDRKGTDDKEQKEEASEEKEQVLEQKDWALGKEGETLDQEARTAEQKDETLKEDKTQGQKSSFVEDKTTTSKETVLDQKSAEKADSVEQQDGAALEKTRALGLEESPAEGSKAREQEKKYWKEQDVVQGWRETSPTRGEPVGGQKEPVPAWEGKSPEQEVRYWRDRDITLQQDAYWRELSCDRKVWFPHELDGQGARPRYCEERESTFLDEGPDEQEITPLQHTPRSPWTSDFKDFQEPLPQKGLEVERWLAESPVGLPPEEEDKLTRSPFEIISPPASPPEMTGQRVPSAPGQESPVPDTESTAPMRNEPTTPSWLAEIPPWVPKDRPLPPAPLSPAPAPPTPAPEPHTPVPFSWGLAEYDSVVAAVQEGAAELEGGPYSPLGKDYRKAEGEREGEGGAGAPDSSSFSPKVPEAGESLATRDTEQTEPEQREPTPYPDERSFQYADIYEQMMLTGLGPACPTREPPLGASGDWPPHLSTKEEAAGCNTSAEKETSSPASPQNLQSDTPAFSYASLAGPAVPPRQEPDPGPNVEPSITPPAVPPRAPISLSKDLSPPLNGSTVSCSPDRRTPSPKETGRGHWDDGTNDSDLEKGAREQPEKETRSPSPHHPMPMGHSSLWPETEAYSSLSSDSHLGSVRPSLDFPASAFGFSSLQPAPPQLPSPAEPRSAPCGSLAFSGDRALALVPGTPTRTRHDEYLEVTKAPSLDSSLPQLPSPSSPGGPLLSNLPRPASPALSEGSSSEATTPVISSVAERFPPGLEAAEQSAEGLGSGKESAAHSLWDLTPLSPAPSASLDLAPAPAPAPAPAPGLPGDLGDGTLPCRPECTGELTKKPSPFLSPSGDHEANGPGETSLNPPGFVTATAEKEEAEAPHAWERGSWPEGAERSSRPDTLLSSEQPLRPGKSSGGPPCSLSSEVEAGPQGCATDPRPHCGELSPSFLNPPLPPSTDDSDLSTEEARLAGKGGRRRVGRPGATGGPCPMADETPPTSASDSGSSQSDSDVPPETEECPSITAEAALDSDEDGDFLPVDKAGGVSGTHHPRPGHDPPPTPLPDPRPSPPRPDVCMADPEGLSSESGRVERLREKGRPGRRAPGRAKPASPARRLDIRGKRSPTPGKGPVDRTSRTVPRPRSTPSQVTSAEEKDGHSPMSKGLVNGLKAGSTALGSKGGSGPPVYVDLAYIPNHCSGKTADQDFFRRVRASYYVVSGNDPANGEPSRAVLDALLEGKAQWGENLQVTLIPTHDTEVTREWYQQTHEQQQQLNVLVLASSSTVVMQDESFPACKIEF</sequence>
<feature type="chain" id="PRO_0000018602" description="Microtubule-associated protein 1A">
    <location>
        <begin position="1"/>
        <end position="2774"/>
    </location>
</feature>
<feature type="chain" id="PRO_0000418378" description="MAP1A heavy chain">
    <location>
        <begin position="1"/>
        <end position="2541"/>
    </location>
</feature>
<feature type="chain" id="PRO_0000018603" description="MAP1 light chain LC2">
    <location>
        <begin position="2542"/>
        <end position="2774"/>
    </location>
</feature>
<feature type="repeat" description="1">
    <location>
        <begin position="336"/>
        <end position="338"/>
    </location>
</feature>
<feature type="repeat" description="2">
    <location>
        <begin position="415"/>
        <end position="417"/>
    </location>
</feature>
<feature type="repeat" description="3">
    <location>
        <begin position="420"/>
        <end position="422"/>
    </location>
</feature>
<feature type="repeat" description="4">
    <location>
        <begin position="424"/>
        <end position="426"/>
    </location>
</feature>
<feature type="repeat" description="5">
    <location>
        <begin position="427"/>
        <end position="429"/>
    </location>
</feature>
<feature type="repeat" description="6">
    <location>
        <begin position="431"/>
        <end position="433"/>
    </location>
</feature>
<feature type="repeat" description="7">
    <location>
        <begin position="436"/>
        <end position="438"/>
    </location>
</feature>
<feature type="repeat" description="8">
    <location>
        <begin position="440"/>
        <end position="442"/>
    </location>
</feature>
<feature type="repeat" description="9">
    <location>
        <begin position="444"/>
        <end position="446"/>
    </location>
</feature>
<feature type="repeat" description="10">
    <location>
        <begin position="449"/>
        <end position="451"/>
    </location>
</feature>
<feature type="repeat" description="11">
    <location>
        <begin position="539"/>
        <end position="541"/>
    </location>
</feature>
<feature type="region of interest" description="Disordered" evidence="3">
    <location>
        <begin position="310"/>
        <end position="329"/>
    </location>
</feature>
<feature type="region of interest" description="11 X 3 AA repeats of K-K-[DE]">
    <location>
        <begin position="336"/>
        <end position="541"/>
    </location>
</feature>
<feature type="region of interest" description="Disordered" evidence="3">
    <location>
        <begin position="342"/>
        <end position="718"/>
    </location>
</feature>
<feature type="region of interest" description="Disordered" evidence="3">
    <location>
        <begin position="737"/>
        <end position="808"/>
    </location>
</feature>
<feature type="region of interest" description="Disordered" evidence="3">
    <location>
        <begin position="845"/>
        <end position="939"/>
    </location>
</feature>
<feature type="region of interest" description="Disordered" evidence="3">
    <location>
        <begin position="957"/>
        <end position="1078"/>
    </location>
</feature>
<feature type="region of interest" description="Disordered" evidence="3">
    <location>
        <begin position="1093"/>
        <end position="1344"/>
    </location>
</feature>
<feature type="region of interest" description="Disordered" evidence="3">
    <location>
        <begin position="1357"/>
        <end position="1646"/>
    </location>
</feature>
<feature type="region of interest" description="Disordered" evidence="3">
    <location>
        <begin position="1693"/>
        <end position="1725"/>
    </location>
</feature>
<feature type="region of interest" description="Disordered" evidence="3">
    <location>
        <begin position="1739"/>
        <end position="1843"/>
    </location>
</feature>
<feature type="region of interest" description="Disordered" evidence="3">
    <location>
        <begin position="1861"/>
        <end position="2644"/>
    </location>
</feature>
<feature type="compositionally biased region" description="Basic and acidic residues" evidence="3">
    <location>
        <begin position="342"/>
        <end position="390"/>
    </location>
</feature>
<feature type="compositionally biased region" description="Basic residues" evidence="3">
    <location>
        <begin position="391"/>
        <end position="406"/>
    </location>
</feature>
<feature type="compositionally biased region" description="Basic and acidic residues" evidence="3">
    <location>
        <begin position="407"/>
        <end position="464"/>
    </location>
</feature>
<feature type="compositionally biased region" description="Basic and acidic residues" evidence="3">
    <location>
        <begin position="484"/>
        <end position="500"/>
    </location>
</feature>
<feature type="compositionally biased region" description="Low complexity" evidence="3">
    <location>
        <begin position="506"/>
        <end position="516"/>
    </location>
</feature>
<feature type="compositionally biased region" description="Basic and acidic residues" evidence="3">
    <location>
        <begin position="536"/>
        <end position="554"/>
    </location>
</feature>
<feature type="compositionally biased region" description="Basic and acidic residues" evidence="3">
    <location>
        <begin position="584"/>
        <end position="595"/>
    </location>
</feature>
<feature type="compositionally biased region" description="Basic and acidic residues" evidence="3">
    <location>
        <begin position="614"/>
        <end position="631"/>
    </location>
</feature>
<feature type="compositionally biased region" description="Basic and acidic residues" evidence="3">
    <location>
        <begin position="638"/>
        <end position="675"/>
    </location>
</feature>
<feature type="compositionally biased region" description="Polar residues" evidence="3">
    <location>
        <begin position="845"/>
        <end position="858"/>
    </location>
</feature>
<feature type="compositionally biased region" description="Polar residues" evidence="3">
    <location>
        <begin position="869"/>
        <end position="881"/>
    </location>
</feature>
<feature type="compositionally biased region" description="Basic and acidic residues" evidence="3">
    <location>
        <begin position="1008"/>
        <end position="1028"/>
    </location>
</feature>
<feature type="compositionally biased region" description="Polar residues" evidence="3">
    <location>
        <begin position="1142"/>
        <end position="1157"/>
    </location>
</feature>
<feature type="compositionally biased region" description="Polar residues" evidence="3">
    <location>
        <begin position="1180"/>
        <end position="1190"/>
    </location>
</feature>
<feature type="compositionally biased region" description="Polar residues" evidence="3">
    <location>
        <begin position="1198"/>
        <end position="1212"/>
    </location>
</feature>
<feature type="compositionally biased region" description="Basic and acidic residues" evidence="3">
    <location>
        <begin position="1220"/>
        <end position="1236"/>
    </location>
</feature>
<feature type="compositionally biased region" description="Low complexity" evidence="3">
    <location>
        <begin position="1293"/>
        <end position="1308"/>
    </location>
</feature>
<feature type="compositionally biased region" description="Basic and acidic residues" evidence="3">
    <location>
        <begin position="1317"/>
        <end position="1336"/>
    </location>
</feature>
<feature type="compositionally biased region" description="Basic and acidic residues" evidence="3">
    <location>
        <begin position="1357"/>
        <end position="1409"/>
    </location>
</feature>
<feature type="compositionally biased region" description="Basic and acidic residues" evidence="3">
    <location>
        <begin position="1416"/>
        <end position="1428"/>
    </location>
</feature>
<feature type="compositionally biased region" description="Basic and acidic residues" evidence="3">
    <location>
        <begin position="1436"/>
        <end position="1479"/>
    </location>
</feature>
<feature type="compositionally biased region" description="Basic and acidic residues" evidence="3">
    <location>
        <begin position="1487"/>
        <end position="1574"/>
    </location>
</feature>
<feature type="compositionally biased region" description="Basic and acidic residues" evidence="3">
    <location>
        <begin position="1599"/>
        <end position="1613"/>
    </location>
</feature>
<feature type="compositionally biased region" description="Polar residues" evidence="3">
    <location>
        <begin position="1707"/>
        <end position="1718"/>
    </location>
</feature>
<feature type="compositionally biased region" description="Polar residues" evidence="3">
    <location>
        <begin position="1789"/>
        <end position="1803"/>
    </location>
</feature>
<feature type="compositionally biased region" description="Pro residues" evidence="3">
    <location>
        <begin position="1818"/>
        <end position="1839"/>
    </location>
</feature>
<feature type="compositionally biased region" description="Basic and acidic residues" evidence="3">
    <location>
        <begin position="1873"/>
        <end position="1885"/>
    </location>
</feature>
<feature type="compositionally biased region" description="Basic and acidic residues" evidence="3">
    <location>
        <begin position="1908"/>
        <end position="1930"/>
    </location>
</feature>
<feature type="compositionally biased region" description="Polar residues" evidence="3">
    <location>
        <begin position="1984"/>
        <end position="1997"/>
    </location>
</feature>
<feature type="compositionally biased region" description="Pro residues" evidence="3">
    <location>
        <begin position="2008"/>
        <end position="2034"/>
    </location>
</feature>
<feature type="compositionally biased region" description="Basic and acidic residues" evidence="3">
    <location>
        <begin position="2055"/>
        <end position="2092"/>
    </location>
</feature>
<feature type="compositionally biased region" description="Low complexity" evidence="3">
    <location>
        <begin position="2115"/>
        <end position="2125"/>
    </location>
</feature>
<feature type="compositionally biased region" description="Pro residues" evidence="3">
    <location>
        <begin position="2144"/>
        <end position="2153"/>
    </location>
</feature>
<feature type="compositionally biased region" description="Polar residues" evidence="3">
    <location>
        <begin position="2226"/>
        <end position="2237"/>
    </location>
</feature>
<feature type="compositionally biased region" description="Low complexity" evidence="3">
    <location>
        <begin position="2271"/>
        <end position="2287"/>
    </location>
</feature>
<feature type="compositionally biased region" description="Pro residues" evidence="3">
    <location>
        <begin position="2288"/>
        <end position="2298"/>
    </location>
</feature>
<feature type="compositionally biased region" description="Low complexity" evidence="3">
    <location>
        <begin position="2299"/>
        <end position="2309"/>
    </location>
</feature>
<feature type="compositionally biased region" description="Basic and acidic residues" evidence="3">
    <location>
        <begin position="2352"/>
        <end position="2364"/>
    </location>
</feature>
<feature type="compositionally biased region" description="Low complexity" evidence="3">
    <location>
        <begin position="2477"/>
        <end position="2489"/>
    </location>
</feature>
<feature type="compositionally biased region" description="Pro residues" evidence="3">
    <location>
        <begin position="2534"/>
        <end position="2550"/>
    </location>
</feature>
<feature type="compositionally biased region" description="Basic and acidic residues" evidence="3">
    <location>
        <begin position="2565"/>
        <end position="2575"/>
    </location>
</feature>
<feature type="compositionally biased region" description="Low complexity" evidence="3">
    <location>
        <begin position="2613"/>
        <end position="2623"/>
    </location>
</feature>
<feature type="modified residue" description="Phosphoserine" evidence="7">
    <location>
        <position position="114"/>
    </location>
</feature>
<feature type="modified residue" description="Phosphoserine" evidence="1">
    <location>
        <position position="117"/>
    </location>
</feature>
<feature type="modified residue" description="Phosphoserine" evidence="2">
    <location>
        <position position="118"/>
    </location>
</feature>
<feature type="modified residue" description="Phosphoserine" evidence="2">
    <location>
        <position position="121"/>
    </location>
</feature>
<feature type="modified residue" description="Phosphoserine" evidence="2">
    <location>
        <position position="155"/>
    </location>
</feature>
<feature type="modified residue" description="Phosphotyrosine" evidence="2">
    <location>
        <position position="177"/>
    </location>
</feature>
<feature type="modified residue" description="Phosphoserine" evidence="7">
    <location>
        <position position="319"/>
    </location>
</feature>
<feature type="modified residue" description="Phosphoserine" evidence="7">
    <location>
        <position position="322"/>
    </location>
</feature>
<feature type="modified residue" description="Phosphoserine" evidence="7">
    <location>
        <position position="384"/>
    </location>
</feature>
<feature type="modified residue" description="Phosphothreonine" evidence="1">
    <location>
        <position position="504"/>
    </location>
</feature>
<feature type="modified residue" description="Phosphoserine" evidence="7">
    <location>
        <position position="526"/>
    </location>
</feature>
<feature type="modified residue" description="Phosphoserine" evidence="7">
    <location>
        <position position="527"/>
    </location>
</feature>
<feature type="modified residue" description="Phosphoserine" evidence="1">
    <location>
        <position position="604"/>
    </location>
</feature>
<feature type="modified residue" description="Phosphoserine" evidence="7">
    <location>
        <position position="611"/>
    </location>
</feature>
<feature type="modified residue" description="Phosphoserine" evidence="7">
    <location>
        <position position="643"/>
    </location>
</feature>
<feature type="modified residue" description="Phosphothreonine" evidence="7">
    <location>
        <position position="663"/>
    </location>
</feature>
<feature type="modified residue" description="Phosphoserine" evidence="7">
    <location>
        <position position="666"/>
    </location>
</feature>
<feature type="modified residue" description="Phosphoserine" evidence="2">
    <location>
        <position position="677"/>
    </location>
</feature>
<feature type="modified residue" description="Phosphoserine" evidence="7">
    <location>
        <position position="690"/>
    </location>
</feature>
<feature type="modified residue" description="Phosphoserine" evidence="1">
    <location>
        <position position="785"/>
    </location>
</feature>
<feature type="modified residue" description="Phosphoserine" evidence="2">
    <location>
        <position position="872"/>
    </location>
</feature>
<feature type="modified residue" description="Phosphoserine" evidence="2">
    <location>
        <position position="875"/>
    </location>
</feature>
<feature type="modified residue" description="Phosphoserine" evidence="2">
    <location>
        <position position="876"/>
    </location>
</feature>
<feature type="modified residue" description="Phosphoserine" evidence="7">
    <location>
        <position position="889"/>
    </location>
</feature>
<feature type="modified residue" description="Phosphothreonine" evidence="7">
    <location>
        <position position="892"/>
    </location>
</feature>
<feature type="modified residue" description="Phosphoserine" evidence="7">
    <location>
        <position position="894"/>
    </location>
</feature>
<feature type="modified residue" description="Phosphoserine" evidence="2">
    <location>
        <position position="898"/>
    </location>
</feature>
<feature type="modified residue" description="Phosphoserine" evidence="7">
    <location>
        <position position="907"/>
    </location>
</feature>
<feature type="modified residue" description="Phosphoserine" evidence="7">
    <location>
        <position position="980"/>
    </location>
</feature>
<feature type="modified residue" description="Phosphoserine" evidence="7">
    <location>
        <position position="990"/>
    </location>
</feature>
<feature type="modified residue" description="Phosphoserine" evidence="2">
    <location>
        <position position="998"/>
    </location>
</feature>
<feature type="modified residue" description="Phosphoserine" evidence="7">
    <location>
        <position position="1007"/>
    </location>
</feature>
<feature type="modified residue" description="Phosphoserine" evidence="7">
    <location>
        <position position="1013"/>
    </location>
</feature>
<feature type="modified residue" description="Phosphoserine" evidence="7">
    <location>
        <position position="1022"/>
    </location>
</feature>
<feature type="modified residue" description="Phosphoserine" evidence="7">
    <location>
        <position position="1029"/>
    </location>
</feature>
<feature type="modified residue" description="Phosphoserine" evidence="7">
    <location>
        <position position="1037"/>
    </location>
</feature>
<feature type="modified residue" description="Phosphoserine" evidence="1">
    <location>
        <position position="1061"/>
    </location>
</feature>
<feature type="modified residue" description="Phosphoserine" evidence="7">
    <location>
        <position position="1132"/>
    </location>
</feature>
<feature type="modified residue" description="Phosphoserine" evidence="7">
    <location>
        <position position="1134"/>
    </location>
</feature>
<feature type="modified residue" description="Phosphoserine" evidence="1">
    <location>
        <position position="1148"/>
    </location>
</feature>
<feature type="modified residue" description="Phosphoserine" evidence="1">
    <location>
        <position position="1160"/>
    </location>
</feature>
<feature type="modified residue" description="Phosphoserine" evidence="7">
    <location>
        <position position="1178"/>
    </location>
</feature>
<feature type="modified residue" description="Phosphoserine" evidence="7">
    <location>
        <position position="1188"/>
    </location>
</feature>
<feature type="modified residue" description="Phosphoserine" evidence="7">
    <location>
        <position position="1191"/>
    </location>
</feature>
<feature type="modified residue" description="Phosphoserine" evidence="2">
    <location>
        <position position="1197"/>
    </location>
</feature>
<feature type="modified residue" description="Phosphoserine" evidence="7">
    <location>
        <position position="1206"/>
    </location>
</feature>
<feature type="modified residue" description="Phosphoserine" evidence="7">
    <location>
        <position position="1209"/>
    </location>
</feature>
<feature type="modified residue" description="Phosphoserine" evidence="7">
    <location>
        <position position="1252"/>
    </location>
</feature>
<feature type="modified residue" description="Phosphoserine" evidence="7">
    <location>
        <position position="1280"/>
    </location>
</feature>
<feature type="modified residue" description="Phosphoserine" evidence="7">
    <location>
        <position position="1301"/>
    </location>
</feature>
<feature type="modified residue" description="Phosphoserine" evidence="7">
    <location>
        <position position="1304"/>
    </location>
</feature>
<feature type="modified residue" description="Phosphoserine" evidence="2">
    <location>
        <position position="1307"/>
    </location>
</feature>
<feature type="modified residue" description="Phosphoserine" evidence="2">
    <location>
        <position position="1504"/>
    </location>
</feature>
<feature type="modified residue" description="Phosphoserine" evidence="1">
    <location>
        <position position="1568"/>
    </location>
</feature>
<feature type="modified residue" description="Phosphoserine" evidence="7">
    <location>
        <position position="1574"/>
    </location>
</feature>
<feature type="modified residue" description="Phosphoserine" evidence="7">
    <location>
        <position position="1594"/>
    </location>
</feature>
<feature type="modified residue" description="Phosphoserine" evidence="7">
    <location>
        <position position="1622"/>
    </location>
</feature>
<feature type="modified residue" description="Phosphoserine" evidence="7">
    <location>
        <position position="1643"/>
    </location>
</feature>
<feature type="modified residue" description="Phosphoserine" evidence="1">
    <location>
        <position position="1715"/>
    </location>
</feature>
<feature type="modified residue" description="Phosphoserine" evidence="7">
    <location>
        <position position="1742"/>
    </location>
</feature>
<feature type="modified residue" description="Phosphoserine" evidence="7">
    <location>
        <position position="1757"/>
    </location>
</feature>
<feature type="modified residue" description="Phosphoserine" evidence="7">
    <location>
        <position position="1763"/>
    </location>
</feature>
<feature type="modified residue" description="Phosphoserine" evidence="7">
    <location>
        <position position="1767"/>
    </location>
</feature>
<feature type="modified residue" description="Phosphothreonine" evidence="7">
    <location>
        <position position="1772"/>
    </location>
</feature>
<feature type="modified residue" description="Phosphoserine" evidence="2">
    <location>
        <position position="1778"/>
    </location>
</feature>
<feature type="modified residue" description="Phosphoserine" evidence="7">
    <location>
        <position position="1784"/>
    </location>
</feature>
<feature type="modified residue" description="Phosphoserine" evidence="7">
    <location>
        <position position="1897"/>
    </location>
</feature>
<feature type="modified residue" description="Phosphothreonine" evidence="1">
    <location>
        <position position="1923"/>
    </location>
</feature>
<feature type="modified residue" description="Phosphoserine" evidence="7">
    <location>
        <position position="1988"/>
    </location>
</feature>
<feature type="modified residue" description="Phosphothreonine" evidence="7">
    <location>
        <position position="2026"/>
    </location>
</feature>
<feature type="modified residue" description="Phosphoserine" evidence="7">
    <location>
        <position position="2043"/>
    </location>
</feature>
<feature type="modified residue" description="Phosphoserine" evidence="7">
    <location>
        <position position="2077"/>
    </location>
</feature>
<feature type="modified residue" description="Phosphoserine" evidence="7">
    <location>
        <position position="2204"/>
    </location>
</feature>
<feature type="modified residue" description="Phosphoserine" evidence="7">
    <location>
        <position position="2221"/>
    </location>
</feature>
<feature type="modified residue" description="Phosphoserine" evidence="7">
    <location>
        <position position="2225"/>
    </location>
</feature>
<feature type="modified residue" description="Phosphoserine" evidence="7">
    <location>
        <position position="2228"/>
    </location>
</feature>
<feature type="modified residue" description="Phosphoserine" evidence="7">
    <location>
        <position position="2229"/>
    </location>
</feature>
<feature type="modified residue" description="Phosphoserine" evidence="7">
    <location>
        <position position="2260"/>
    </location>
</feature>
<feature type="modified residue" description="Phosphoserine" evidence="1">
    <location>
        <position position="2424"/>
    </location>
</feature>
<feature type="modified residue" description="Phosphoserine" evidence="1">
    <location>
        <position position="2620"/>
    </location>
</feature>
<feature type="modified residue" description="Phosphoserine" evidence="1">
    <location>
        <position position="2635"/>
    </location>
</feature>
<keyword id="KW-0963">Cytoplasm</keyword>
<keyword id="KW-0206">Cytoskeleton</keyword>
<keyword id="KW-0493">Microtubule</keyword>
<keyword id="KW-0597">Phosphoprotein</keyword>
<keyword id="KW-1185">Reference proteome</keyword>
<keyword id="KW-0677">Repeat</keyword>
<gene>
    <name type="primary">Map1a</name>
    <name type="synonym">Mtap1a</name>
</gene>
<dbReference type="EMBL" id="M83196">
    <property type="protein sequence ID" value="AAB48069.1"/>
    <property type="molecule type" value="mRNA"/>
</dbReference>
<dbReference type="PIR" id="A43359">
    <property type="entry name" value="A43359"/>
</dbReference>
<dbReference type="RefSeq" id="NP_112257.1">
    <property type="nucleotide sequence ID" value="NM_030995.1"/>
</dbReference>
<dbReference type="BioGRID" id="247217">
    <property type="interactions" value="9"/>
</dbReference>
<dbReference type="DIP" id="DIP-29265N"/>
<dbReference type="FunCoup" id="P34926">
    <property type="interactions" value="1618"/>
</dbReference>
<dbReference type="IntAct" id="P34926">
    <property type="interactions" value="9"/>
</dbReference>
<dbReference type="MINT" id="P34926"/>
<dbReference type="STRING" id="10116.ENSRNOP00000073375"/>
<dbReference type="GlyGen" id="P34926">
    <property type="glycosylation" value="6 sites, 1 O-linked glycan (1 site)"/>
</dbReference>
<dbReference type="iPTMnet" id="P34926"/>
<dbReference type="PhosphoSitePlus" id="P34926"/>
<dbReference type="SwissPalm" id="P34926"/>
<dbReference type="jPOST" id="P34926"/>
<dbReference type="PaxDb" id="10116-ENSRNOP00000019320"/>
<dbReference type="GeneID" id="25152"/>
<dbReference type="KEGG" id="rno:25152"/>
<dbReference type="UCSC" id="RGD:3042">
    <property type="organism name" value="rat"/>
</dbReference>
<dbReference type="AGR" id="RGD:3042"/>
<dbReference type="CTD" id="4130"/>
<dbReference type="RGD" id="3042">
    <property type="gene designation" value="Map1a"/>
</dbReference>
<dbReference type="eggNOG" id="KOG3592">
    <property type="taxonomic scope" value="Eukaryota"/>
</dbReference>
<dbReference type="InParanoid" id="P34926"/>
<dbReference type="PhylomeDB" id="P34926"/>
<dbReference type="PRO" id="PR:P34926"/>
<dbReference type="Proteomes" id="UP000002494">
    <property type="component" value="Unplaced"/>
</dbReference>
<dbReference type="GO" id="GO:0030424">
    <property type="term" value="C:axon"/>
    <property type="evidence" value="ECO:0000314"/>
    <property type="project" value="UniProtKB"/>
</dbReference>
<dbReference type="GO" id="GO:1904115">
    <property type="term" value="C:axon cytoplasm"/>
    <property type="evidence" value="ECO:0007669"/>
    <property type="project" value="GOC"/>
</dbReference>
<dbReference type="GO" id="GO:0043194">
    <property type="term" value="C:axon initial segment"/>
    <property type="evidence" value="ECO:0000266"/>
    <property type="project" value="RGD"/>
</dbReference>
<dbReference type="GO" id="GO:0005737">
    <property type="term" value="C:cytoplasm"/>
    <property type="evidence" value="ECO:0000314"/>
    <property type="project" value="ARUK-UCL"/>
</dbReference>
<dbReference type="GO" id="GO:0005829">
    <property type="term" value="C:cytosol"/>
    <property type="evidence" value="ECO:0000266"/>
    <property type="project" value="RGD"/>
</dbReference>
<dbReference type="GO" id="GO:0030425">
    <property type="term" value="C:dendrite"/>
    <property type="evidence" value="ECO:0000314"/>
    <property type="project" value="UniProtKB"/>
</dbReference>
<dbReference type="GO" id="GO:0044307">
    <property type="term" value="C:dendritic branch"/>
    <property type="evidence" value="ECO:0000314"/>
    <property type="project" value="ARUK-UCL"/>
</dbReference>
<dbReference type="GO" id="GO:1901588">
    <property type="term" value="C:dendritic microtubule"/>
    <property type="evidence" value="ECO:0000266"/>
    <property type="project" value="RGD"/>
</dbReference>
<dbReference type="GO" id="GO:0043198">
    <property type="term" value="C:dendritic shaft"/>
    <property type="evidence" value="ECO:0000314"/>
    <property type="project" value="ARUK-UCL"/>
</dbReference>
<dbReference type="GO" id="GO:0098978">
    <property type="term" value="C:glutamatergic synapse"/>
    <property type="evidence" value="ECO:0000314"/>
    <property type="project" value="SynGO"/>
</dbReference>
<dbReference type="GO" id="GO:0005874">
    <property type="term" value="C:microtubule"/>
    <property type="evidence" value="ECO:0000318"/>
    <property type="project" value="GO_Central"/>
</dbReference>
<dbReference type="GO" id="GO:0005875">
    <property type="term" value="C:microtubule associated complex"/>
    <property type="evidence" value="ECO:0000314"/>
    <property type="project" value="RGD"/>
</dbReference>
<dbReference type="GO" id="GO:0043005">
    <property type="term" value="C:neuron projection"/>
    <property type="evidence" value="ECO:0000314"/>
    <property type="project" value="ARUK-UCL"/>
</dbReference>
<dbReference type="GO" id="GO:0043025">
    <property type="term" value="C:neuronal cell body"/>
    <property type="evidence" value="ECO:0000314"/>
    <property type="project" value="ARUK-UCL"/>
</dbReference>
<dbReference type="GO" id="GO:0001750">
    <property type="term" value="C:photoreceptor outer segment"/>
    <property type="evidence" value="ECO:0000266"/>
    <property type="project" value="RGD"/>
</dbReference>
<dbReference type="GO" id="GO:0014069">
    <property type="term" value="C:postsynaptic density"/>
    <property type="evidence" value="ECO:0000314"/>
    <property type="project" value="SynGO"/>
</dbReference>
<dbReference type="GO" id="GO:0048786">
    <property type="term" value="C:presynaptic active zone"/>
    <property type="evidence" value="ECO:0000314"/>
    <property type="project" value="SynGO"/>
</dbReference>
<dbReference type="GO" id="GO:0150001">
    <property type="term" value="C:primary dendrite"/>
    <property type="evidence" value="ECO:0000314"/>
    <property type="project" value="ARUK-UCL"/>
</dbReference>
<dbReference type="GO" id="GO:0045202">
    <property type="term" value="C:synapse"/>
    <property type="evidence" value="ECO:0000318"/>
    <property type="project" value="GO_Central"/>
</dbReference>
<dbReference type="GO" id="GO:0003779">
    <property type="term" value="F:actin binding"/>
    <property type="evidence" value="ECO:0000314"/>
    <property type="project" value="RGD"/>
</dbReference>
<dbReference type="GO" id="GO:0005518">
    <property type="term" value="F:collagen binding"/>
    <property type="evidence" value="ECO:0000353"/>
    <property type="project" value="RGD"/>
</dbReference>
<dbReference type="GO" id="GO:0008093">
    <property type="term" value="F:cytoskeletal anchor activity"/>
    <property type="evidence" value="ECO:0000266"/>
    <property type="project" value="RGD"/>
</dbReference>
<dbReference type="GO" id="GO:0035255">
    <property type="term" value="F:ionotropic glutamate receptor binding"/>
    <property type="evidence" value="ECO:0000266"/>
    <property type="project" value="RGD"/>
</dbReference>
<dbReference type="GO" id="GO:0008017">
    <property type="term" value="F:microtubule binding"/>
    <property type="evidence" value="ECO:0000314"/>
    <property type="project" value="ARUK-UCL"/>
</dbReference>
<dbReference type="GO" id="GO:0099181">
    <property type="term" value="F:structural constituent of presynapse"/>
    <property type="evidence" value="ECO:0000314"/>
    <property type="project" value="SynGO"/>
</dbReference>
<dbReference type="GO" id="GO:0015631">
    <property type="term" value="F:tubulin binding"/>
    <property type="evidence" value="ECO:0000266"/>
    <property type="project" value="RGD"/>
</dbReference>
<dbReference type="GO" id="GO:0099641">
    <property type="term" value="P:anterograde axonal protein transport"/>
    <property type="evidence" value="ECO:0000266"/>
    <property type="project" value="RGD"/>
</dbReference>
<dbReference type="GO" id="GO:0008306">
    <property type="term" value="P:associative learning"/>
    <property type="evidence" value="ECO:0000266"/>
    <property type="project" value="RGD"/>
</dbReference>
<dbReference type="GO" id="GO:0007409">
    <property type="term" value="P:axonogenesis"/>
    <property type="evidence" value="ECO:0000318"/>
    <property type="project" value="GO_Central"/>
</dbReference>
<dbReference type="GO" id="GO:0016358">
    <property type="term" value="P:dendrite development"/>
    <property type="evidence" value="ECO:0000318"/>
    <property type="project" value="GO_Central"/>
</dbReference>
<dbReference type="GO" id="GO:0007613">
    <property type="term" value="P:memory"/>
    <property type="evidence" value="ECO:0000266"/>
    <property type="project" value="RGD"/>
</dbReference>
<dbReference type="GO" id="GO:0000226">
    <property type="term" value="P:microtubule cytoskeleton organization"/>
    <property type="evidence" value="ECO:0000266"/>
    <property type="project" value="RGD"/>
</dbReference>
<dbReference type="GO" id="GO:0007026">
    <property type="term" value="P:negative regulation of microtubule depolymerization"/>
    <property type="evidence" value="ECO:0000314"/>
    <property type="project" value="RGD"/>
</dbReference>
<dbReference type="GO" id="GO:0032435">
    <property type="term" value="P:negative regulation of proteasomal ubiquitin-dependent protein catabolic process"/>
    <property type="evidence" value="ECO:0000266"/>
    <property type="project" value="RGD"/>
</dbReference>
<dbReference type="GO" id="GO:1902817">
    <property type="term" value="P:negative regulation of protein localization to microtubule"/>
    <property type="evidence" value="ECO:0000266"/>
    <property type="project" value="RGD"/>
</dbReference>
<dbReference type="GO" id="GO:0070050">
    <property type="term" value="P:neuron cellular homeostasis"/>
    <property type="evidence" value="ECO:0000266"/>
    <property type="project" value="RGD"/>
</dbReference>
<dbReference type="GO" id="GO:1990535">
    <property type="term" value="P:neuron projection maintenance"/>
    <property type="evidence" value="ECO:0000266"/>
    <property type="project" value="RGD"/>
</dbReference>
<dbReference type="GO" id="GO:0045494">
    <property type="term" value="P:photoreceptor cell maintenance"/>
    <property type="evidence" value="ECO:0000266"/>
    <property type="project" value="RGD"/>
</dbReference>
<dbReference type="GO" id="GO:1903829">
    <property type="term" value="P:positive regulation of protein localization"/>
    <property type="evidence" value="ECO:0000266"/>
    <property type="project" value="RGD"/>
</dbReference>
<dbReference type="GO" id="GO:2000010">
    <property type="term" value="P:positive regulation of protein localization to cell surface"/>
    <property type="evidence" value="ECO:0000266"/>
    <property type="project" value="RGD"/>
</dbReference>
<dbReference type="GO" id="GO:0031114">
    <property type="term" value="P:regulation of microtubule depolymerization"/>
    <property type="evidence" value="ECO:0000318"/>
    <property type="project" value="GO_Central"/>
</dbReference>
<dbReference type="GO" id="GO:0048167">
    <property type="term" value="P:regulation of synaptic plasticity"/>
    <property type="evidence" value="ECO:0000266"/>
    <property type="project" value="RGD"/>
</dbReference>
<dbReference type="GO" id="GO:0099642">
    <property type="term" value="P:retrograde axonal protein transport"/>
    <property type="evidence" value="ECO:0000266"/>
    <property type="project" value="RGD"/>
</dbReference>
<dbReference type="GO" id="GO:0007605">
    <property type="term" value="P:sensory perception of sound"/>
    <property type="evidence" value="ECO:0000266"/>
    <property type="project" value="RGD"/>
</dbReference>
<dbReference type="GO" id="GO:0050882">
    <property type="term" value="P:voluntary musculoskeletal movement"/>
    <property type="evidence" value="ECO:0000266"/>
    <property type="project" value="RGD"/>
</dbReference>
<dbReference type="InterPro" id="IPR026074">
    <property type="entry name" value="MAP1"/>
</dbReference>
<dbReference type="InterPro" id="IPR036866">
    <property type="entry name" value="RibonucZ/Hydroxyglut_hydro"/>
</dbReference>
<dbReference type="PANTHER" id="PTHR13843">
    <property type="entry name" value="MICROTUBULE-ASSOCIATED PROTEIN"/>
    <property type="match status" value="1"/>
</dbReference>
<dbReference type="PANTHER" id="PTHR13843:SF6">
    <property type="entry name" value="MICROTUBULE-ASSOCIATED PROTEIN 1A"/>
    <property type="match status" value="1"/>
</dbReference>
<dbReference type="Pfam" id="PF25281">
    <property type="entry name" value="MBL_MAP1B"/>
    <property type="match status" value="1"/>
</dbReference>
<dbReference type="SUPFAM" id="SSF56281">
    <property type="entry name" value="Metallo-hydrolase/oxidoreductase"/>
    <property type="match status" value="1"/>
</dbReference>
<comment type="function">
    <text>Structural protein involved in the filamentous cross-bridging between microtubules and other skeletal elements.</text>
</comment>
<comment type="subunit">
    <text evidence="2 4 5">3 different light chains, LC1 (a cleavage product of MAP1B), LC2 (a cleavage product of MAP1A) and LC3 (produced by one of the MAP1LC3 genes), can associate with the MAP1A or MAP1B heavy chains. Interacts with guanylate kinase-like domain of DLG1, DLG2 and DLG4. Binds to CSNK1D. Interacts with TIAM2 (By similarity).</text>
</comment>
<comment type="subunit">
    <molecule>MAP1 light chain LC2</molecule>
    <text evidence="2">Interacts with ELAVL4.</text>
</comment>
<comment type="interaction">
    <interactant intactId="EBI-631571">
        <id>P34926</id>
    </interactant>
    <interactant intactId="EBI-389325">
        <id>Q62696</id>
        <label>Dlg1</label>
    </interactant>
    <organismsDiffer>false</organismsDiffer>
    <experiments>2</experiments>
</comment>
<comment type="interaction">
    <interactant intactId="EBI-631571">
        <id>P34926</id>
    </interactant>
    <interactant intactId="EBI-396947">
        <id>Q63622</id>
        <label>Dlg2</label>
    </interactant>
    <organismsDiffer>false</organismsDiffer>
    <experiments>4</experiments>
</comment>
<comment type="interaction">
    <interactant intactId="EBI-631571">
        <id>P34926</id>
    </interactant>
    <interactant intactId="EBI-375655">
        <id>P31016</id>
        <label>Dlg4</label>
    </interactant>
    <organismsDiffer>false</organismsDiffer>
    <experiments>16</experiments>
</comment>
<comment type="subcellular location">
    <subcellularLocation>
        <location evidence="6">Cytoplasm</location>
        <location evidence="6">Cytoskeleton</location>
    </subcellularLocation>
</comment>
<comment type="tissue specificity">
    <text>Brain, heart and muscle.</text>
</comment>
<comment type="developmental stage">
    <text>Expressed late during neuronal development appearing when axons and dendrites begin to solidify and stabilize their morphology.</text>
</comment>
<comment type="domain">
    <text>The basic region containing the repeats may be responsible for the binding of MAP1A to microtubules.</text>
</comment>
<comment type="PTM">
    <text evidence="4">Phosphorylated by CSNK1D.</text>
</comment>
<comment type="PTM">
    <text>LC2 is generated from MAP1A by proteolytic processing. It is free to associate with both MAP1A and MAP1B.</text>
</comment>
<comment type="similarity">
    <text evidence="6">Belongs to the MAP1 family.</text>
</comment>
<reference key="1">
    <citation type="journal article" date="1992" name="J. Biol. Chem.">
        <title>Microtubule-associated proteins 1A and LC2. Two proteins encoded in one messenger RNA.</title>
        <authorList>
            <person name="Langkopf A."/>
            <person name="Hammarback J.A."/>
            <person name="Mueller R."/>
            <person name="Vallee R.B."/>
            <person name="Garner C.C."/>
        </authorList>
    </citation>
    <scope>NUCLEOTIDE SEQUENCE [MRNA]</scope>
    <source>
        <tissue>Brain</tissue>
    </source>
</reference>
<reference key="2">
    <citation type="journal article" date="1998" name="J. Neurosci.">
        <title>Localization of postsynaptic density-93 to dendritic microtubules and interaction with microtubule-associated protein 1A.</title>
        <authorList>
            <person name="Brenman J.E."/>
            <person name="Topinka J.R."/>
            <person name="Cooper E.C."/>
            <person name="McGee A.W."/>
            <person name="Rosen J."/>
            <person name="Milroy T."/>
            <person name="Ralston H.J."/>
            <person name="Bredt D.S."/>
        </authorList>
    </citation>
    <scope>INTERACTION WITH DLG1; DLG2 AND DLG4</scope>
</reference>
<reference key="3">
    <citation type="journal article" date="2005" name="Biochim. Biophys. Acta">
        <title>Interaction of casein kinase 1 delta (CK1 delta) with the light chain LC2 of microtubule associated protein 1A (MAP1A).</title>
        <authorList>
            <person name="Wolff S."/>
            <person name="Xiao Z."/>
            <person name="Wittau M."/>
            <person name="Suessner N."/>
            <person name="Stoeter M."/>
            <person name="Knippschild U."/>
        </authorList>
    </citation>
    <scope>INTERACTION WITH CSNK1D</scope>
    <scope>PHOSPHORYLATION BY CSNK1D</scope>
</reference>
<reference key="4">
    <citation type="journal article" date="2012" name="Nat. Commun.">
        <title>Quantitative maps of protein phosphorylation sites across 14 different rat organs and tissues.</title>
        <authorList>
            <person name="Lundby A."/>
            <person name="Secher A."/>
            <person name="Lage K."/>
            <person name="Nordsborg N.B."/>
            <person name="Dmytriyev A."/>
            <person name="Lundby C."/>
            <person name="Olsen J.V."/>
        </authorList>
    </citation>
    <scope>PHOSPHORYLATION [LARGE SCALE ANALYSIS] AT SER-114; SER-319; SER-322; SER-384; SER-526; SER-527; SER-611; SER-643; THR-663; SER-666; SER-690; SER-889; THR-892; SER-894; SER-907; SER-980; SER-990; SER-1007; SER-1013; SER-1022; SER-1029; SER-1037; SER-1132; SER-1134; SER-1178; SER-1188; SER-1191; SER-1206; SER-1209; SER-1252; SER-1280; SER-1301; SER-1304; SER-1574; SER-1594; SER-1622; SER-1643; SER-1742; SER-1757; SER-1763; SER-1767; THR-1772; SER-1784; SER-1897; SER-1988; THR-2026; SER-2043; SER-2077; SER-2204; SER-2221; SER-2225; SER-2228; SER-2229 AND SER-2260</scope>
    <scope>IDENTIFICATION BY MASS SPECTROMETRY [LARGE SCALE ANALYSIS]</scope>
</reference>
<organism>
    <name type="scientific">Rattus norvegicus</name>
    <name type="common">Rat</name>
    <dbReference type="NCBI Taxonomy" id="10116"/>
    <lineage>
        <taxon>Eukaryota</taxon>
        <taxon>Metazoa</taxon>
        <taxon>Chordata</taxon>
        <taxon>Craniata</taxon>
        <taxon>Vertebrata</taxon>
        <taxon>Euteleostomi</taxon>
        <taxon>Mammalia</taxon>
        <taxon>Eutheria</taxon>
        <taxon>Euarchontoglires</taxon>
        <taxon>Glires</taxon>
        <taxon>Rodentia</taxon>
        <taxon>Myomorpha</taxon>
        <taxon>Muroidea</taxon>
        <taxon>Muridae</taxon>
        <taxon>Murinae</taxon>
        <taxon>Rattus</taxon>
    </lineage>
</organism>
<protein>
    <recommendedName>
        <fullName>Microtubule-associated protein 1A</fullName>
        <shortName>MAP-1A</shortName>
    </recommendedName>
    <component>
        <recommendedName>
            <fullName>MAP1A heavy chain</fullName>
        </recommendedName>
    </component>
    <component>
        <recommendedName>
            <fullName>MAP1 light chain LC2</fullName>
        </recommendedName>
    </component>
</protein>
<name>MAP1A_RAT</name>
<evidence type="ECO:0000250" key="1">
    <source>
        <dbReference type="UniProtKB" id="P78559"/>
    </source>
</evidence>
<evidence type="ECO:0000250" key="2">
    <source>
        <dbReference type="UniProtKB" id="Q9QYR6"/>
    </source>
</evidence>
<evidence type="ECO:0000256" key="3">
    <source>
        <dbReference type="SAM" id="MobiDB-lite"/>
    </source>
</evidence>
<evidence type="ECO:0000269" key="4">
    <source>
    </source>
</evidence>
<evidence type="ECO:0000269" key="5">
    <source>
    </source>
</evidence>
<evidence type="ECO:0000305" key="6"/>
<evidence type="ECO:0007744" key="7">
    <source>
    </source>
</evidence>